<proteinExistence type="inferred from homology"/>
<sequence length="573" mass="62331">MISNFILFALFIVTIALITKPLGSYIFRVFNNERTYLDWLAKPFQRVYLLVLGESSKKEQTAKAYFFSLVSFSVMAFIFVLVILLLQGILPLNPQEIKGMSFPQALNTAVSFITNTNWQSYSGETGVSYFAQMLALAVQNFVSAAVGLCVAIALIRSVARHETATIGNFWNDLGKGVFWILLPISIVIAIVYIFQGVPQNVMAYLHVHTLAGTEQIIPQGPIASQEAIKSLGTNGGGFFNANSAHPYENPTVITNYIQMVSIFAIAAALTYTFGKWVGNTKQGWLIFGVMLVLFIISLVVMTISELHGLDFLHSKDIQDIYGQVGHLSNMEGKESRFGVFYSTLYNTVSTSASDGGVNSVLDSYSPLAGMMAMLNMAIGEVIFGGVGAGFYGFFMFLMLAVFIGSLMIGRAPSFLGKRIEANDMKWTMFALLIFPCCVLVFTGLAAVIPSVHQTLTNSGAHGFSEILYAYISGANNNGSAFAGLSANTNYLNITIALSMLIGRFGVIFAVIMLAGSLVKKKRSLQMSEISSLDTTSFIFAILVFFTILLIGGLTIFPALGLGPILDQLNLNFL</sequence>
<evidence type="ECO:0000255" key="1">
    <source>
        <dbReference type="HAMAP-Rule" id="MF_00275"/>
    </source>
</evidence>
<keyword id="KW-0997">Cell inner membrane</keyword>
<keyword id="KW-1003">Cell membrane</keyword>
<keyword id="KW-0406">Ion transport</keyword>
<keyword id="KW-0472">Membrane</keyword>
<keyword id="KW-0630">Potassium</keyword>
<keyword id="KW-0633">Potassium transport</keyword>
<keyword id="KW-0812">Transmembrane</keyword>
<keyword id="KW-1133">Transmembrane helix</keyword>
<keyword id="KW-0813">Transport</keyword>
<organism>
    <name type="scientific">Francisella tularensis subsp. holarctica (strain OSU18)</name>
    <dbReference type="NCBI Taxonomy" id="393011"/>
    <lineage>
        <taxon>Bacteria</taxon>
        <taxon>Pseudomonadati</taxon>
        <taxon>Pseudomonadota</taxon>
        <taxon>Gammaproteobacteria</taxon>
        <taxon>Thiotrichales</taxon>
        <taxon>Francisellaceae</taxon>
        <taxon>Francisella</taxon>
    </lineage>
</organism>
<dbReference type="EMBL" id="CP000437">
    <property type="protein sequence ID" value="ABI83564.1"/>
    <property type="molecule type" value="Genomic_DNA"/>
</dbReference>
<dbReference type="RefSeq" id="WP_003017453.1">
    <property type="nucleotide sequence ID" value="NC_017463.1"/>
</dbReference>
<dbReference type="SMR" id="Q0BK20"/>
<dbReference type="KEGG" id="fth:FTH_1808"/>
<dbReference type="GO" id="GO:0005886">
    <property type="term" value="C:plasma membrane"/>
    <property type="evidence" value="ECO:0007669"/>
    <property type="project" value="UniProtKB-SubCell"/>
</dbReference>
<dbReference type="GO" id="GO:0008556">
    <property type="term" value="F:P-type potassium transmembrane transporter activity"/>
    <property type="evidence" value="ECO:0007669"/>
    <property type="project" value="InterPro"/>
</dbReference>
<dbReference type="GO" id="GO:0030955">
    <property type="term" value="F:potassium ion binding"/>
    <property type="evidence" value="ECO:0007669"/>
    <property type="project" value="UniProtKB-UniRule"/>
</dbReference>
<dbReference type="HAMAP" id="MF_00275">
    <property type="entry name" value="KdpA"/>
    <property type="match status" value="1"/>
</dbReference>
<dbReference type="InterPro" id="IPR004623">
    <property type="entry name" value="KdpA"/>
</dbReference>
<dbReference type="NCBIfam" id="TIGR00680">
    <property type="entry name" value="kdpA"/>
    <property type="match status" value="1"/>
</dbReference>
<dbReference type="PANTHER" id="PTHR30607">
    <property type="entry name" value="POTASSIUM-TRANSPORTING ATPASE A CHAIN"/>
    <property type="match status" value="1"/>
</dbReference>
<dbReference type="PANTHER" id="PTHR30607:SF2">
    <property type="entry name" value="POTASSIUM-TRANSPORTING ATPASE POTASSIUM-BINDING SUBUNIT"/>
    <property type="match status" value="1"/>
</dbReference>
<dbReference type="Pfam" id="PF03814">
    <property type="entry name" value="KdpA"/>
    <property type="match status" value="1"/>
</dbReference>
<dbReference type="PIRSF" id="PIRSF001294">
    <property type="entry name" value="K_ATPaseA"/>
    <property type="match status" value="1"/>
</dbReference>
<name>KDPA_FRATO</name>
<protein>
    <recommendedName>
        <fullName evidence="1">Potassium-transporting ATPase potassium-binding subunit</fullName>
    </recommendedName>
    <alternativeName>
        <fullName evidence="1">ATP phosphohydrolase [potassium-transporting] A chain</fullName>
    </alternativeName>
    <alternativeName>
        <fullName evidence="1">Potassium-binding and translocating subunit A</fullName>
    </alternativeName>
    <alternativeName>
        <fullName evidence="1">Potassium-translocating ATPase A chain</fullName>
    </alternativeName>
</protein>
<feature type="chain" id="PRO_1000119346" description="Potassium-transporting ATPase potassium-binding subunit">
    <location>
        <begin position="1"/>
        <end position="573"/>
    </location>
</feature>
<feature type="transmembrane region" description="Helical" evidence="1">
    <location>
        <begin position="6"/>
        <end position="26"/>
    </location>
</feature>
<feature type="transmembrane region" description="Helical" evidence="1">
    <location>
        <begin position="66"/>
        <end position="86"/>
    </location>
</feature>
<feature type="transmembrane region" description="Helical" evidence="1">
    <location>
        <begin position="135"/>
        <end position="155"/>
    </location>
</feature>
<feature type="transmembrane region" description="Helical" evidence="1">
    <location>
        <begin position="177"/>
        <end position="197"/>
    </location>
</feature>
<feature type="transmembrane region" description="Helical" evidence="1">
    <location>
        <begin position="257"/>
        <end position="277"/>
    </location>
</feature>
<feature type="transmembrane region" description="Helical" evidence="1">
    <location>
        <begin position="283"/>
        <end position="303"/>
    </location>
</feature>
<feature type="transmembrane region" description="Helical" evidence="1">
    <location>
        <begin position="382"/>
        <end position="402"/>
    </location>
</feature>
<feature type="transmembrane region" description="Helical" evidence="1">
    <location>
        <begin position="428"/>
        <end position="448"/>
    </location>
</feature>
<feature type="transmembrane region" description="Helical" evidence="1">
    <location>
        <begin position="493"/>
        <end position="513"/>
    </location>
</feature>
<feature type="transmembrane region" description="Helical" evidence="1">
    <location>
        <begin position="537"/>
        <end position="557"/>
    </location>
</feature>
<comment type="function">
    <text evidence="1">Part of the high-affinity ATP-driven potassium transport (or Kdp) system, which catalyzes the hydrolysis of ATP coupled with the electrogenic transport of potassium into the cytoplasm. This subunit binds the periplasmic potassium ions and delivers the ions to the membrane domain of KdpB through an intramembrane tunnel.</text>
</comment>
<comment type="subunit">
    <text evidence="1">The system is composed of three essential subunits: KdpA, KdpB and KdpC.</text>
</comment>
<comment type="subcellular location">
    <subcellularLocation>
        <location evidence="1">Cell inner membrane</location>
        <topology evidence="1">Multi-pass membrane protein</topology>
    </subcellularLocation>
</comment>
<comment type="similarity">
    <text evidence="1">Belongs to the KdpA family.</text>
</comment>
<reference key="1">
    <citation type="journal article" date="2006" name="J. Bacteriol.">
        <title>Chromosome rearrangement and diversification of Francisella tularensis revealed by the type B (OSU18) genome sequence.</title>
        <authorList>
            <person name="Petrosino J.F."/>
            <person name="Xiang Q."/>
            <person name="Karpathy S.E."/>
            <person name="Jiang H."/>
            <person name="Yerrapragada S."/>
            <person name="Liu Y."/>
            <person name="Gioia J."/>
            <person name="Hemphill L."/>
            <person name="Gonzalez A."/>
            <person name="Raghavan T.M."/>
            <person name="Uzman A."/>
            <person name="Fox G.E."/>
            <person name="Highlander S."/>
            <person name="Reichard M."/>
            <person name="Morton R.J."/>
            <person name="Clinkenbeard K.D."/>
            <person name="Weinstock G.M."/>
        </authorList>
    </citation>
    <scope>NUCLEOTIDE SEQUENCE [LARGE SCALE GENOMIC DNA]</scope>
    <source>
        <strain>OSU18</strain>
    </source>
</reference>
<gene>
    <name evidence="1" type="primary">kdpA</name>
    <name type="ordered locus">FTH_1808</name>
</gene>
<accession>Q0BK20</accession>